<gene>
    <name type="primary">mrps-16</name>
    <name type="ORF">F56D1.3</name>
</gene>
<evidence type="ECO:0000250" key="1">
    <source>
        <dbReference type="UniProtKB" id="Q9Y3D3"/>
    </source>
</evidence>
<evidence type="ECO:0000305" key="2"/>
<sequence>MRKLVIPKYYGRPSIGLALFGCTNRPFYHVCVFPDRALGRRYEGNILEQVGTFDPLPNQKNEKLVALNFGRLKYWIGERNAHISVPVLELLGLSGLFPIHPKSFIRAKDNRALIADQQLKVAAEAAEAEKVAQEQASTGAAATSHPQ</sequence>
<name>RT16_CAEEL</name>
<protein>
    <recommendedName>
        <fullName evidence="2">Small ribosomal subunit protein bS16m</fullName>
    </recommendedName>
    <alternativeName>
        <fullName evidence="2">28S ribosomal protein S16, mitochondrial</fullName>
        <shortName>MRP-S16</shortName>
        <shortName>S16mt</shortName>
    </alternativeName>
</protein>
<dbReference type="EMBL" id="FO081078">
    <property type="protein sequence ID" value="CCD68956.1"/>
    <property type="molecule type" value="Genomic_DNA"/>
</dbReference>
<dbReference type="PIR" id="T30112">
    <property type="entry name" value="T30112"/>
</dbReference>
<dbReference type="RefSeq" id="NP_001022207.1">
    <property type="nucleotide sequence ID" value="NM_001027036.2"/>
</dbReference>
<dbReference type="RefSeq" id="NP_001370640.1">
    <property type="nucleotide sequence ID" value="NM_001383835.2"/>
</dbReference>
<dbReference type="SMR" id="Q10129"/>
<dbReference type="BioGRID" id="532787">
    <property type="interactions" value="3"/>
</dbReference>
<dbReference type="FunCoup" id="Q10129">
    <property type="interactions" value="2565"/>
</dbReference>
<dbReference type="IntAct" id="Q10129">
    <property type="interactions" value="1"/>
</dbReference>
<dbReference type="STRING" id="6239.F56D1.3.1"/>
<dbReference type="PaxDb" id="6239-F56D1.3"/>
<dbReference type="PeptideAtlas" id="Q10129"/>
<dbReference type="EnsemblMetazoa" id="F56D1.3.1">
    <property type="protein sequence ID" value="F56D1.3.1"/>
    <property type="gene ID" value="WBGene00018961"/>
</dbReference>
<dbReference type="GeneID" id="3565469"/>
<dbReference type="UCSC" id="F56D1.3.1">
    <property type="organism name" value="c. elegans"/>
</dbReference>
<dbReference type="AGR" id="WB:WBGene00018961"/>
<dbReference type="WormBase" id="F56D1.3">
    <property type="protein sequence ID" value="CE29407"/>
    <property type="gene ID" value="WBGene00018961"/>
    <property type="gene designation" value="mrps-16"/>
</dbReference>
<dbReference type="eggNOG" id="KOG3419">
    <property type="taxonomic scope" value="Eukaryota"/>
</dbReference>
<dbReference type="GeneTree" id="ENSGT00390000014309"/>
<dbReference type="HOGENOM" id="CLU_100590_4_1_1"/>
<dbReference type="InParanoid" id="Q10129"/>
<dbReference type="OMA" id="PNDYNER"/>
<dbReference type="OrthoDB" id="407221at2759"/>
<dbReference type="PhylomeDB" id="Q10129"/>
<dbReference type="Reactome" id="R-CEL-5389840">
    <property type="pathway name" value="Mitochondrial translation elongation"/>
</dbReference>
<dbReference type="Reactome" id="R-CEL-5419276">
    <property type="pathway name" value="Mitochondrial translation termination"/>
</dbReference>
<dbReference type="PRO" id="PR:Q10129"/>
<dbReference type="Proteomes" id="UP000001940">
    <property type="component" value="Chromosome II"/>
</dbReference>
<dbReference type="Bgee" id="WBGene00018961">
    <property type="expression patterns" value="Expressed in pharyngeal muscle cell (C elegans) and 4 other cell types or tissues"/>
</dbReference>
<dbReference type="GO" id="GO:0005763">
    <property type="term" value="C:mitochondrial small ribosomal subunit"/>
    <property type="evidence" value="ECO:0000250"/>
    <property type="project" value="UniProtKB"/>
</dbReference>
<dbReference type="GO" id="GO:0003735">
    <property type="term" value="F:structural constituent of ribosome"/>
    <property type="evidence" value="ECO:0000250"/>
    <property type="project" value="UniProtKB"/>
</dbReference>
<dbReference type="GO" id="GO:0032543">
    <property type="term" value="P:mitochondrial translation"/>
    <property type="evidence" value="ECO:0000250"/>
    <property type="project" value="UniProtKB"/>
</dbReference>
<dbReference type="FunFam" id="3.30.1320.10:FF:000004">
    <property type="entry name" value="28S ribosomal protein S16, mitochondrial"/>
    <property type="match status" value="1"/>
</dbReference>
<dbReference type="Gene3D" id="3.30.1320.10">
    <property type="match status" value="1"/>
</dbReference>
<dbReference type="InterPro" id="IPR000307">
    <property type="entry name" value="Ribosomal_bS16"/>
</dbReference>
<dbReference type="InterPro" id="IPR023803">
    <property type="entry name" value="Ribosomal_bS16_dom_sf"/>
</dbReference>
<dbReference type="PANTHER" id="PTHR12919">
    <property type="entry name" value="30S RIBOSOMAL PROTEIN S16"/>
    <property type="match status" value="1"/>
</dbReference>
<dbReference type="PANTHER" id="PTHR12919:SF20">
    <property type="entry name" value="SMALL RIBOSOMAL SUBUNIT PROTEIN BS16M"/>
    <property type="match status" value="1"/>
</dbReference>
<dbReference type="Pfam" id="PF00886">
    <property type="entry name" value="Ribosomal_S16"/>
    <property type="match status" value="1"/>
</dbReference>
<dbReference type="SUPFAM" id="SSF54565">
    <property type="entry name" value="Ribosomal protein S16"/>
    <property type="match status" value="1"/>
</dbReference>
<proteinExistence type="inferred from homology"/>
<keyword id="KW-0496">Mitochondrion</keyword>
<keyword id="KW-1185">Reference proteome</keyword>
<keyword id="KW-0687">Ribonucleoprotein</keyword>
<keyword id="KW-0689">Ribosomal protein</keyword>
<comment type="subunit">
    <text evidence="1">Component of the mitochondrial ribosome small subunit (28S) which comprises a 12S rRNA and about 30 distinct proteins.</text>
</comment>
<comment type="subcellular location">
    <subcellularLocation>
        <location evidence="1">Mitochondrion</location>
    </subcellularLocation>
</comment>
<comment type="similarity">
    <text evidence="2">Belongs to the bacterial ribosomal protein bS16 family.</text>
</comment>
<reference key="1">
    <citation type="journal article" date="1998" name="Science">
        <title>Genome sequence of the nematode C. elegans: a platform for investigating biology.</title>
        <authorList>
            <consortium name="The C. elegans sequencing consortium"/>
        </authorList>
    </citation>
    <scope>NUCLEOTIDE SEQUENCE [LARGE SCALE GENOMIC DNA]</scope>
    <source>
        <strain>Bristol N2</strain>
    </source>
</reference>
<feature type="chain" id="PRO_0000167328" description="Small ribosomal subunit protein bS16m">
    <location>
        <begin position="1"/>
        <end position="147"/>
    </location>
</feature>
<organism>
    <name type="scientific">Caenorhabditis elegans</name>
    <dbReference type="NCBI Taxonomy" id="6239"/>
    <lineage>
        <taxon>Eukaryota</taxon>
        <taxon>Metazoa</taxon>
        <taxon>Ecdysozoa</taxon>
        <taxon>Nematoda</taxon>
        <taxon>Chromadorea</taxon>
        <taxon>Rhabditida</taxon>
        <taxon>Rhabditina</taxon>
        <taxon>Rhabditomorpha</taxon>
        <taxon>Rhabditoidea</taxon>
        <taxon>Rhabditidae</taxon>
        <taxon>Peloderinae</taxon>
        <taxon>Caenorhabditis</taxon>
    </lineage>
</organism>
<accession>Q10129</accession>